<accession>Q9JMC3</accession>
<accession>B2RW09</accession>
<accession>Q543S9</accession>
<accession>Q9CTD6</accession>
<accession>Q9CUD4</accession>
<organism>
    <name type="scientific">Mus musculus</name>
    <name type="common">Mouse</name>
    <dbReference type="NCBI Taxonomy" id="10090"/>
    <lineage>
        <taxon>Eukaryota</taxon>
        <taxon>Metazoa</taxon>
        <taxon>Chordata</taxon>
        <taxon>Craniata</taxon>
        <taxon>Vertebrata</taxon>
        <taxon>Euteleostomi</taxon>
        <taxon>Mammalia</taxon>
        <taxon>Eutheria</taxon>
        <taxon>Euarchontoglires</taxon>
        <taxon>Glires</taxon>
        <taxon>Rodentia</taxon>
        <taxon>Myomorpha</taxon>
        <taxon>Muroidea</taxon>
        <taxon>Muridae</taxon>
        <taxon>Murinae</taxon>
        <taxon>Mus</taxon>
        <taxon>Mus</taxon>
    </lineage>
</organism>
<evidence type="ECO:0000250" key="1"/>
<evidence type="ECO:0000250" key="2">
    <source>
        <dbReference type="UniProtKB" id="Q8WW22"/>
    </source>
</evidence>
<evidence type="ECO:0000256" key="3">
    <source>
        <dbReference type="SAM" id="MobiDB-lite"/>
    </source>
</evidence>
<evidence type="ECO:0000305" key="4"/>
<gene>
    <name type="primary">Dnaja4</name>
</gene>
<reference key="1">
    <citation type="journal article" date="2000" name="Biochim. Biophys. Acta">
        <title>Murine cDNA encoding a novel type I HSP40/DNAJ homolog, mmDjA4.</title>
        <authorList>
            <person name="Hata M."/>
            <person name="Ohtsuka K."/>
        </authorList>
    </citation>
    <scope>NUCLEOTIDE SEQUENCE [MRNA]</scope>
    <source>
        <strain>CD-1</strain>
    </source>
</reference>
<reference key="2">
    <citation type="journal article" date="2005" name="Science">
        <title>The transcriptional landscape of the mammalian genome.</title>
        <authorList>
            <person name="Carninci P."/>
            <person name="Kasukawa T."/>
            <person name="Katayama S."/>
            <person name="Gough J."/>
            <person name="Frith M.C."/>
            <person name="Maeda N."/>
            <person name="Oyama R."/>
            <person name="Ravasi T."/>
            <person name="Lenhard B."/>
            <person name="Wells C."/>
            <person name="Kodzius R."/>
            <person name="Shimokawa K."/>
            <person name="Bajic V.B."/>
            <person name="Brenner S.E."/>
            <person name="Batalov S."/>
            <person name="Forrest A.R."/>
            <person name="Zavolan M."/>
            <person name="Davis M.J."/>
            <person name="Wilming L.G."/>
            <person name="Aidinis V."/>
            <person name="Allen J.E."/>
            <person name="Ambesi-Impiombato A."/>
            <person name="Apweiler R."/>
            <person name="Aturaliya R.N."/>
            <person name="Bailey T.L."/>
            <person name="Bansal M."/>
            <person name="Baxter L."/>
            <person name="Beisel K.W."/>
            <person name="Bersano T."/>
            <person name="Bono H."/>
            <person name="Chalk A.M."/>
            <person name="Chiu K.P."/>
            <person name="Choudhary V."/>
            <person name="Christoffels A."/>
            <person name="Clutterbuck D.R."/>
            <person name="Crowe M.L."/>
            <person name="Dalla E."/>
            <person name="Dalrymple B.P."/>
            <person name="de Bono B."/>
            <person name="Della Gatta G."/>
            <person name="di Bernardo D."/>
            <person name="Down T."/>
            <person name="Engstrom P."/>
            <person name="Fagiolini M."/>
            <person name="Faulkner G."/>
            <person name="Fletcher C.F."/>
            <person name="Fukushima T."/>
            <person name="Furuno M."/>
            <person name="Futaki S."/>
            <person name="Gariboldi M."/>
            <person name="Georgii-Hemming P."/>
            <person name="Gingeras T.R."/>
            <person name="Gojobori T."/>
            <person name="Green R.E."/>
            <person name="Gustincich S."/>
            <person name="Harbers M."/>
            <person name="Hayashi Y."/>
            <person name="Hensch T.K."/>
            <person name="Hirokawa N."/>
            <person name="Hill D."/>
            <person name="Huminiecki L."/>
            <person name="Iacono M."/>
            <person name="Ikeo K."/>
            <person name="Iwama A."/>
            <person name="Ishikawa T."/>
            <person name="Jakt M."/>
            <person name="Kanapin A."/>
            <person name="Katoh M."/>
            <person name="Kawasawa Y."/>
            <person name="Kelso J."/>
            <person name="Kitamura H."/>
            <person name="Kitano H."/>
            <person name="Kollias G."/>
            <person name="Krishnan S.P."/>
            <person name="Kruger A."/>
            <person name="Kummerfeld S.K."/>
            <person name="Kurochkin I.V."/>
            <person name="Lareau L.F."/>
            <person name="Lazarevic D."/>
            <person name="Lipovich L."/>
            <person name="Liu J."/>
            <person name="Liuni S."/>
            <person name="McWilliam S."/>
            <person name="Madan Babu M."/>
            <person name="Madera M."/>
            <person name="Marchionni L."/>
            <person name="Matsuda H."/>
            <person name="Matsuzawa S."/>
            <person name="Miki H."/>
            <person name="Mignone F."/>
            <person name="Miyake S."/>
            <person name="Morris K."/>
            <person name="Mottagui-Tabar S."/>
            <person name="Mulder N."/>
            <person name="Nakano N."/>
            <person name="Nakauchi H."/>
            <person name="Ng P."/>
            <person name="Nilsson R."/>
            <person name="Nishiguchi S."/>
            <person name="Nishikawa S."/>
            <person name="Nori F."/>
            <person name="Ohara O."/>
            <person name="Okazaki Y."/>
            <person name="Orlando V."/>
            <person name="Pang K.C."/>
            <person name="Pavan W.J."/>
            <person name="Pavesi G."/>
            <person name="Pesole G."/>
            <person name="Petrovsky N."/>
            <person name="Piazza S."/>
            <person name="Reed J."/>
            <person name="Reid J.F."/>
            <person name="Ring B.Z."/>
            <person name="Ringwald M."/>
            <person name="Rost B."/>
            <person name="Ruan Y."/>
            <person name="Salzberg S.L."/>
            <person name="Sandelin A."/>
            <person name="Schneider C."/>
            <person name="Schoenbach C."/>
            <person name="Sekiguchi K."/>
            <person name="Semple C.A."/>
            <person name="Seno S."/>
            <person name="Sessa L."/>
            <person name="Sheng Y."/>
            <person name="Shibata Y."/>
            <person name="Shimada H."/>
            <person name="Shimada K."/>
            <person name="Silva D."/>
            <person name="Sinclair B."/>
            <person name="Sperling S."/>
            <person name="Stupka E."/>
            <person name="Sugiura K."/>
            <person name="Sultana R."/>
            <person name="Takenaka Y."/>
            <person name="Taki K."/>
            <person name="Tammoja K."/>
            <person name="Tan S.L."/>
            <person name="Tang S."/>
            <person name="Taylor M.S."/>
            <person name="Tegner J."/>
            <person name="Teichmann S.A."/>
            <person name="Ueda H.R."/>
            <person name="van Nimwegen E."/>
            <person name="Verardo R."/>
            <person name="Wei C.L."/>
            <person name="Yagi K."/>
            <person name="Yamanishi H."/>
            <person name="Zabarovsky E."/>
            <person name="Zhu S."/>
            <person name="Zimmer A."/>
            <person name="Hide W."/>
            <person name="Bult C."/>
            <person name="Grimmond S.M."/>
            <person name="Teasdale R.D."/>
            <person name="Liu E.T."/>
            <person name="Brusic V."/>
            <person name="Quackenbush J."/>
            <person name="Wahlestedt C."/>
            <person name="Mattick J.S."/>
            <person name="Hume D.A."/>
            <person name="Kai C."/>
            <person name="Sasaki D."/>
            <person name="Tomaru Y."/>
            <person name="Fukuda S."/>
            <person name="Kanamori-Katayama M."/>
            <person name="Suzuki M."/>
            <person name="Aoki J."/>
            <person name="Arakawa T."/>
            <person name="Iida J."/>
            <person name="Imamura K."/>
            <person name="Itoh M."/>
            <person name="Kato T."/>
            <person name="Kawaji H."/>
            <person name="Kawagashira N."/>
            <person name="Kawashima T."/>
            <person name="Kojima M."/>
            <person name="Kondo S."/>
            <person name="Konno H."/>
            <person name="Nakano K."/>
            <person name="Ninomiya N."/>
            <person name="Nishio T."/>
            <person name="Okada M."/>
            <person name="Plessy C."/>
            <person name="Shibata K."/>
            <person name="Shiraki T."/>
            <person name="Suzuki S."/>
            <person name="Tagami M."/>
            <person name="Waki K."/>
            <person name="Watahiki A."/>
            <person name="Okamura-Oho Y."/>
            <person name="Suzuki H."/>
            <person name="Kawai J."/>
            <person name="Hayashizaki Y."/>
        </authorList>
    </citation>
    <scope>NUCLEOTIDE SEQUENCE [LARGE SCALE MRNA]</scope>
    <source>
        <strain>C57BL/6J</strain>
        <tissue>Brain</tissue>
        <tissue>Corpora quadrigemina</tissue>
        <tissue>Embryo</tissue>
        <tissue>Spinal ganglion</tissue>
        <tissue>Testis</tissue>
    </source>
</reference>
<reference key="3">
    <citation type="journal article" date="2004" name="Genome Res.">
        <title>The status, quality, and expansion of the NIH full-length cDNA project: the Mammalian Gene Collection (MGC).</title>
        <authorList>
            <consortium name="The MGC Project Team"/>
        </authorList>
    </citation>
    <scope>NUCLEOTIDE SEQUENCE [LARGE SCALE MRNA]</scope>
    <source>
        <tissue>Brain</tissue>
    </source>
</reference>
<reference key="4">
    <citation type="journal article" date="2010" name="Cell">
        <title>A tissue-specific atlas of mouse protein phosphorylation and expression.</title>
        <authorList>
            <person name="Huttlin E.L."/>
            <person name="Jedrychowski M.P."/>
            <person name="Elias J.E."/>
            <person name="Goswami T."/>
            <person name="Rad R."/>
            <person name="Beausoleil S.A."/>
            <person name="Villen J."/>
            <person name="Haas W."/>
            <person name="Sowa M.E."/>
            <person name="Gygi S.P."/>
        </authorList>
    </citation>
    <scope>IDENTIFICATION BY MASS SPECTROMETRY [LARGE SCALE ANALYSIS]</scope>
    <source>
        <tissue>Brain</tissue>
        <tissue>Brown adipose tissue</tissue>
        <tissue>Heart</tissue>
        <tissue>Lung</tissue>
        <tissue>Spleen</tissue>
        <tissue>Testis</tissue>
    </source>
</reference>
<feature type="chain" id="PRO_0000071015" description="DnaJ homolog subfamily A member 4">
    <location>
        <begin position="1"/>
        <end position="394"/>
    </location>
</feature>
<feature type="propeptide" id="PRO_0000396761" description="Removed in mature form" evidence="1">
    <location>
        <begin position="395"/>
        <end position="397"/>
    </location>
</feature>
<feature type="domain" description="J">
    <location>
        <begin position="4"/>
        <end position="70"/>
    </location>
</feature>
<feature type="repeat" description="CXXCXGXG motif">
    <location>
        <begin position="135"/>
        <end position="142"/>
    </location>
</feature>
<feature type="repeat" description="CXXCXGXG motif">
    <location>
        <begin position="151"/>
        <end position="158"/>
    </location>
</feature>
<feature type="repeat" description="CXXCXGXG motif">
    <location>
        <begin position="178"/>
        <end position="185"/>
    </location>
</feature>
<feature type="repeat" description="CXXCXGXG motif">
    <location>
        <begin position="194"/>
        <end position="201"/>
    </location>
</feature>
<feature type="zinc finger region" description="CR-type">
    <location>
        <begin position="122"/>
        <end position="206"/>
    </location>
</feature>
<feature type="region of interest" description="Disordered" evidence="3">
    <location>
        <begin position="366"/>
        <end position="397"/>
    </location>
</feature>
<feature type="compositionally biased region" description="Basic and acidic residues" evidence="3">
    <location>
        <begin position="366"/>
        <end position="380"/>
    </location>
</feature>
<feature type="binding site" evidence="1">
    <location>
        <position position="135"/>
    </location>
    <ligand>
        <name>Zn(2+)</name>
        <dbReference type="ChEBI" id="CHEBI:29105"/>
        <label>1</label>
    </ligand>
</feature>
<feature type="binding site" evidence="1">
    <location>
        <position position="138"/>
    </location>
    <ligand>
        <name>Zn(2+)</name>
        <dbReference type="ChEBI" id="CHEBI:29105"/>
        <label>1</label>
    </ligand>
</feature>
<feature type="binding site" evidence="1">
    <location>
        <position position="151"/>
    </location>
    <ligand>
        <name>Zn(2+)</name>
        <dbReference type="ChEBI" id="CHEBI:29105"/>
        <label>2</label>
    </ligand>
</feature>
<feature type="binding site" evidence="1">
    <location>
        <position position="154"/>
    </location>
    <ligand>
        <name>Zn(2+)</name>
        <dbReference type="ChEBI" id="CHEBI:29105"/>
        <label>2</label>
    </ligand>
</feature>
<feature type="binding site" evidence="1">
    <location>
        <position position="178"/>
    </location>
    <ligand>
        <name>Zn(2+)</name>
        <dbReference type="ChEBI" id="CHEBI:29105"/>
        <label>2</label>
    </ligand>
</feature>
<feature type="binding site" evidence="1">
    <location>
        <position position="181"/>
    </location>
    <ligand>
        <name>Zn(2+)</name>
        <dbReference type="ChEBI" id="CHEBI:29105"/>
        <label>2</label>
    </ligand>
</feature>
<feature type="binding site" evidence="1">
    <location>
        <position position="194"/>
    </location>
    <ligand>
        <name>Zn(2+)</name>
        <dbReference type="ChEBI" id="CHEBI:29105"/>
        <label>1</label>
    </ligand>
</feature>
<feature type="binding site" evidence="1">
    <location>
        <position position="197"/>
    </location>
    <ligand>
        <name>Zn(2+)</name>
        <dbReference type="ChEBI" id="CHEBI:29105"/>
        <label>1</label>
    </ligand>
</feature>
<feature type="modified residue" description="Phosphoserine" evidence="2">
    <location>
        <position position="18"/>
    </location>
</feature>
<feature type="modified residue" description="Cysteine methyl ester" evidence="1">
    <location>
        <position position="394"/>
    </location>
</feature>
<feature type="lipid moiety-binding region" description="S-farnesyl cysteine" evidence="1">
    <location>
        <position position="394"/>
    </location>
</feature>
<protein>
    <recommendedName>
        <fullName>DnaJ homolog subfamily A member 4</fullName>
    </recommendedName>
    <alternativeName>
        <fullName>MmDjA4</fullName>
    </alternativeName>
</protein>
<keyword id="KW-0143">Chaperone</keyword>
<keyword id="KW-0449">Lipoprotein</keyword>
<keyword id="KW-0472">Membrane</keyword>
<keyword id="KW-0479">Metal-binding</keyword>
<keyword id="KW-0488">Methylation</keyword>
<keyword id="KW-0597">Phosphoprotein</keyword>
<keyword id="KW-0636">Prenylation</keyword>
<keyword id="KW-1185">Reference proteome</keyword>
<keyword id="KW-0677">Repeat</keyword>
<keyword id="KW-0862">Zinc</keyword>
<keyword id="KW-0863">Zinc-finger</keyword>
<sequence length="397" mass="44902">MVKETQYYDILGVKPSASPEEIKKAYRKLALKYHPDKNPDEGEKFKLISQAYEVLSDPKKRDIYDQGGEQAIKEGGSGSPSFSSPMDIFDMFFGGGGRMTRERRGKNVVHQLSVTLEDLYNGITKKLALQKNVICEKCEGIGGKKGSVEKCPLCKGRGMQVHIQQIGPGMVQQIQTVCIECKGQGERINPKDRCENCSGAKVTREKKIIEVHVEKGMKDGQKILFHGEGDQEPELDPGDVIIVLDQKDHSVFQRRGQDLIMKMKIQLSEALCGFKKTIKTLDDRVLVISSKSGEVIKHGDLKCIRNEGMPIYKAPLEKGVMIIQFLVVFPEKQWLSQEKLPQLEALLPPRQKVRITDDMDQVELKEFNPNEQSWRQHREAYEEDDEEPRAGVQCQTA</sequence>
<dbReference type="EMBL" id="AB032401">
    <property type="protein sequence ID" value="BAA92775.1"/>
    <property type="molecule type" value="mRNA"/>
</dbReference>
<dbReference type="EMBL" id="AK003903">
    <property type="protein sequence ID" value="BAB23067.1"/>
    <property type="molecule type" value="mRNA"/>
</dbReference>
<dbReference type="EMBL" id="AK016666">
    <property type="protein sequence ID" value="BAB30367.2"/>
    <property type="status" value="ALT_INIT"/>
    <property type="molecule type" value="mRNA"/>
</dbReference>
<dbReference type="EMBL" id="AK046476">
    <property type="protein sequence ID" value="BAC32747.1"/>
    <property type="molecule type" value="mRNA"/>
</dbReference>
<dbReference type="EMBL" id="AK076175">
    <property type="protein sequence ID" value="BAC36232.1"/>
    <property type="molecule type" value="mRNA"/>
</dbReference>
<dbReference type="EMBL" id="AK141909">
    <property type="protein sequence ID" value="BAE24880.1"/>
    <property type="molecule type" value="mRNA"/>
</dbReference>
<dbReference type="EMBL" id="BC147484">
    <property type="protein sequence ID" value="AAI47485.1"/>
    <property type="molecule type" value="mRNA"/>
</dbReference>
<dbReference type="EMBL" id="BC147486">
    <property type="protein sequence ID" value="AAI47487.1"/>
    <property type="molecule type" value="mRNA"/>
</dbReference>
<dbReference type="CCDS" id="CCDS23193.1"/>
<dbReference type="RefSeq" id="NP_067397.1">
    <property type="nucleotide sequence ID" value="NM_021422.4"/>
</dbReference>
<dbReference type="SMR" id="Q9JMC3"/>
<dbReference type="BioGRID" id="208406">
    <property type="interactions" value="5"/>
</dbReference>
<dbReference type="FunCoup" id="Q9JMC3">
    <property type="interactions" value="1199"/>
</dbReference>
<dbReference type="IntAct" id="Q9JMC3">
    <property type="interactions" value="1"/>
</dbReference>
<dbReference type="STRING" id="10090.ENSMUSP00000070413"/>
<dbReference type="GlyGen" id="Q9JMC3">
    <property type="glycosylation" value="1 site, 1 N-linked glycan (1 site)"/>
</dbReference>
<dbReference type="iPTMnet" id="Q9JMC3"/>
<dbReference type="PhosphoSitePlus" id="Q9JMC3"/>
<dbReference type="SwissPalm" id="Q9JMC3"/>
<dbReference type="REPRODUCTION-2DPAGE" id="Q9JMC3"/>
<dbReference type="jPOST" id="Q9JMC3"/>
<dbReference type="PaxDb" id="10090-ENSMUSP00000070413"/>
<dbReference type="PeptideAtlas" id="Q9JMC3"/>
<dbReference type="ProteomicsDB" id="277348"/>
<dbReference type="Pumba" id="Q9JMC3"/>
<dbReference type="Antibodypedia" id="27578">
    <property type="antibodies" value="144 antibodies from 24 providers"/>
</dbReference>
<dbReference type="DNASU" id="58233"/>
<dbReference type="Ensembl" id="ENSMUST00000070070.8">
    <property type="protein sequence ID" value="ENSMUSP00000070413.8"/>
    <property type="gene ID" value="ENSMUSG00000032285.16"/>
</dbReference>
<dbReference type="Ensembl" id="ENSMUST00000120452.8">
    <property type="protein sequence ID" value="ENSMUSP00000112520.2"/>
    <property type="gene ID" value="ENSMUSG00000032285.16"/>
</dbReference>
<dbReference type="GeneID" id="58233"/>
<dbReference type="KEGG" id="mmu:58233"/>
<dbReference type="UCSC" id="uc009prk.2">
    <property type="organism name" value="mouse"/>
</dbReference>
<dbReference type="AGR" id="MGI:1927638"/>
<dbReference type="CTD" id="55466"/>
<dbReference type="MGI" id="MGI:1927638">
    <property type="gene designation" value="Dnaja4"/>
</dbReference>
<dbReference type="VEuPathDB" id="HostDB:ENSMUSG00000032285"/>
<dbReference type="eggNOG" id="KOG0712">
    <property type="taxonomic scope" value="Eukaryota"/>
</dbReference>
<dbReference type="GeneTree" id="ENSGT00940000155707"/>
<dbReference type="HOGENOM" id="CLU_017633_10_0_1"/>
<dbReference type="InParanoid" id="Q9JMC3"/>
<dbReference type="OMA" id="FPDVINP"/>
<dbReference type="OrthoDB" id="550424at2759"/>
<dbReference type="PhylomeDB" id="Q9JMC3"/>
<dbReference type="TreeFam" id="TF105141"/>
<dbReference type="Reactome" id="R-MMU-3371497">
    <property type="pathway name" value="HSP90 chaperone cycle for steroid hormone receptors (SHR) in the presence of ligand"/>
</dbReference>
<dbReference type="BioGRID-ORCS" id="58233">
    <property type="hits" value="1 hit in 76 CRISPR screens"/>
</dbReference>
<dbReference type="ChiTaRS" id="Dnaja4">
    <property type="organism name" value="mouse"/>
</dbReference>
<dbReference type="PRO" id="PR:Q9JMC3"/>
<dbReference type="Proteomes" id="UP000000589">
    <property type="component" value="Chromosome 9"/>
</dbReference>
<dbReference type="RNAct" id="Q9JMC3">
    <property type="molecule type" value="protein"/>
</dbReference>
<dbReference type="Bgee" id="ENSMUSG00000032285">
    <property type="expression patterns" value="Expressed in seminiferous tubule of testis and 218 other cell types or tissues"/>
</dbReference>
<dbReference type="ExpressionAtlas" id="Q9JMC3">
    <property type="expression patterns" value="baseline and differential"/>
</dbReference>
<dbReference type="GO" id="GO:0005829">
    <property type="term" value="C:cytosol"/>
    <property type="evidence" value="ECO:0007669"/>
    <property type="project" value="Ensembl"/>
</dbReference>
<dbReference type="GO" id="GO:0016020">
    <property type="term" value="C:membrane"/>
    <property type="evidence" value="ECO:0007669"/>
    <property type="project" value="UniProtKB-SubCell"/>
</dbReference>
<dbReference type="GO" id="GO:0005524">
    <property type="term" value="F:ATP binding"/>
    <property type="evidence" value="ECO:0007669"/>
    <property type="project" value="InterPro"/>
</dbReference>
<dbReference type="GO" id="GO:0030544">
    <property type="term" value="F:Hsp70 protein binding"/>
    <property type="evidence" value="ECO:0007669"/>
    <property type="project" value="InterPro"/>
</dbReference>
<dbReference type="GO" id="GO:0051082">
    <property type="term" value="F:unfolded protein binding"/>
    <property type="evidence" value="ECO:0007669"/>
    <property type="project" value="Ensembl"/>
</dbReference>
<dbReference type="GO" id="GO:0008270">
    <property type="term" value="F:zinc ion binding"/>
    <property type="evidence" value="ECO:0007669"/>
    <property type="project" value="UniProtKB-KW"/>
</dbReference>
<dbReference type="GO" id="GO:0010596">
    <property type="term" value="P:negative regulation of endothelial cell migration"/>
    <property type="evidence" value="ECO:0007669"/>
    <property type="project" value="Ensembl"/>
</dbReference>
<dbReference type="GO" id="GO:0090084">
    <property type="term" value="P:negative regulation of inclusion body assembly"/>
    <property type="evidence" value="ECO:0007669"/>
    <property type="project" value="Ensembl"/>
</dbReference>
<dbReference type="GO" id="GO:0010628">
    <property type="term" value="P:positive regulation of gene expression"/>
    <property type="evidence" value="ECO:0007669"/>
    <property type="project" value="Ensembl"/>
</dbReference>
<dbReference type="GO" id="GO:0042026">
    <property type="term" value="P:protein refolding"/>
    <property type="evidence" value="ECO:0007669"/>
    <property type="project" value="Ensembl"/>
</dbReference>
<dbReference type="GO" id="GO:0009408">
    <property type="term" value="P:response to heat"/>
    <property type="evidence" value="ECO:0007669"/>
    <property type="project" value="InterPro"/>
</dbReference>
<dbReference type="CDD" id="cd06257">
    <property type="entry name" value="DnaJ"/>
    <property type="match status" value="1"/>
</dbReference>
<dbReference type="CDD" id="cd10747">
    <property type="entry name" value="DnaJ_C"/>
    <property type="match status" value="1"/>
</dbReference>
<dbReference type="CDD" id="cd10719">
    <property type="entry name" value="DnaJ_zf"/>
    <property type="match status" value="1"/>
</dbReference>
<dbReference type="FunFam" id="2.10.230.10:FF:000005">
    <property type="entry name" value="DnaJ homolog subfamily A member 1"/>
    <property type="match status" value="1"/>
</dbReference>
<dbReference type="FunFam" id="1.10.287.110:FF:000014">
    <property type="entry name" value="dnaJ homolog subfamily A member 1"/>
    <property type="match status" value="1"/>
</dbReference>
<dbReference type="FunFam" id="2.60.260.20:FF:000003">
    <property type="entry name" value="DnaJ subfamily A member 2"/>
    <property type="match status" value="1"/>
</dbReference>
<dbReference type="Gene3D" id="1.10.287.110">
    <property type="entry name" value="DnaJ domain"/>
    <property type="match status" value="1"/>
</dbReference>
<dbReference type="Gene3D" id="2.10.230.10">
    <property type="entry name" value="Heat shock protein DnaJ, cysteine-rich domain"/>
    <property type="match status" value="1"/>
</dbReference>
<dbReference type="Gene3D" id="2.60.260.20">
    <property type="entry name" value="Urease metallochaperone UreE, N-terminal domain"/>
    <property type="match status" value="2"/>
</dbReference>
<dbReference type="HAMAP" id="MF_01152">
    <property type="entry name" value="DnaJ"/>
    <property type="match status" value="1"/>
</dbReference>
<dbReference type="InterPro" id="IPR012724">
    <property type="entry name" value="DnaJ"/>
</dbReference>
<dbReference type="InterPro" id="IPR002939">
    <property type="entry name" value="DnaJ_C"/>
</dbReference>
<dbReference type="InterPro" id="IPR001623">
    <property type="entry name" value="DnaJ_domain"/>
</dbReference>
<dbReference type="InterPro" id="IPR018253">
    <property type="entry name" value="DnaJ_domain_CS"/>
</dbReference>
<dbReference type="InterPro" id="IPR044713">
    <property type="entry name" value="DNJA1/2-like"/>
</dbReference>
<dbReference type="InterPro" id="IPR008971">
    <property type="entry name" value="HSP40/DnaJ_pept-bd"/>
</dbReference>
<dbReference type="InterPro" id="IPR001305">
    <property type="entry name" value="HSP_DnaJ_Cys-rich_dom"/>
</dbReference>
<dbReference type="InterPro" id="IPR036410">
    <property type="entry name" value="HSP_DnaJ_Cys-rich_dom_sf"/>
</dbReference>
<dbReference type="InterPro" id="IPR036869">
    <property type="entry name" value="J_dom_sf"/>
</dbReference>
<dbReference type="PANTHER" id="PTHR43888">
    <property type="entry name" value="DNAJ-LIKE-2, ISOFORM A-RELATED"/>
    <property type="match status" value="1"/>
</dbReference>
<dbReference type="Pfam" id="PF00226">
    <property type="entry name" value="DnaJ"/>
    <property type="match status" value="1"/>
</dbReference>
<dbReference type="Pfam" id="PF01556">
    <property type="entry name" value="DnaJ_C"/>
    <property type="match status" value="1"/>
</dbReference>
<dbReference type="Pfam" id="PF00684">
    <property type="entry name" value="DnaJ_CXXCXGXG"/>
    <property type="match status" value="1"/>
</dbReference>
<dbReference type="PRINTS" id="PR00625">
    <property type="entry name" value="JDOMAIN"/>
</dbReference>
<dbReference type="SMART" id="SM00271">
    <property type="entry name" value="DnaJ"/>
    <property type="match status" value="1"/>
</dbReference>
<dbReference type="SUPFAM" id="SSF46565">
    <property type="entry name" value="Chaperone J-domain"/>
    <property type="match status" value="1"/>
</dbReference>
<dbReference type="SUPFAM" id="SSF57938">
    <property type="entry name" value="DnaJ/Hsp40 cysteine-rich domain"/>
    <property type="match status" value="1"/>
</dbReference>
<dbReference type="SUPFAM" id="SSF49493">
    <property type="entry name" value="HSP40/DnaJ peptide-binding domain"/>
    <property type="match status" value="2"/>
</dbReference>
<dbReference type="PROSITE" id="PS00636">
    <property type="entry name" value="DNAJ_1"/>
    <property type="match status" value="1"/>
</dbReference>
<dbReference type="PROSITE" id="PS50076">
    <property type="entry name" value="DNAJ_2"/>
    <property type="match status" value="1"/>
</dbReference>
<dbReference type="PROSITE" id="PS51188">
    <property type="entry name" value="ZF_CR"/>
    <property type="match status" value="1"/>
</dbReference>
<comment type="subcellular location">
    <subcellularLocation>
        <location evidence="4">Membrane</location>
        <topology evidence="4">Lipid-anchor</topology>
    </subcellularLocation>
</comment>
<comment type="tissue specificity">
    <text>Specifically expressed in testis and heart.</text>
</comment>
<comment type="sequence caution" evidence="4">
    <conflict type="erroneous initiation">
        <sequence resource="EMBL-CDS" id="BAB30367"/>
    </conflict>
</comment>
<proteinExistence type="evidence at protein level"/>
<name>DNJA4_MOUSE</name>